<feature type="chain" id="PRO_0000200294" description="Type II nicking enzyme V.NmeAIP">
    <location>
        <begin position="1"/>
        <end position="140"/>
    </location>
</feature>
<organism>
    <name type="scientific">Neisseria meningitidis serogroup A / serotype 4A (strain DSM 15465 / Z2491)</name>
    <dbReference type="NCBI Taxonomy" id="122587"/>
    <lineage>
        <taxon>Bacteria</taxon>
        <taxon>Pseudomonadati</taxon>
        <taxon>Pseudomonadota</taxon>
        <taxon>Betaproteobacteria</taxon>
        <taxon>Neisseriales</taxon>
        <taxon>Neisseriaceae</taxon>
        <taxon>Neisseria</taxon>
    </lineage>
</organism>
<accession>Q9JWD6</accession>
<accession>A1IPP5</accession>
<protein>
    <recommendedName>
        <fullName evidence="2">Type II nicking enzyme V.NmeAIP</fullName>
        <ecNumber>3.1.-.-</ecNumber>
    </recommendedName>
    <alternativeName>
        <fullName>Very short patch repair endonuclease</fullName>
    </alternativeName>
</protein>
<dbReference type="EC" id="3.1.-.-"/>
<dbReference type="EMBL" id="AL157959">
    <property type="protein sequence ID" value="CAM07716.1"/>
    <property type="molecule type" value="Genomic_DNA"/>
</dbReference>
<dbReference type="PIR" id="H81959">
    <property type="entry name" value="H81959"/>
</dbReference>
<dbReference type="RefSeq" id="WP_002246501.1">
    <property type="nucleotide sequence ID" value="NC_003116.1"/>
</dbReference>
<dbReference type="SMR" id="Q9JWD6"/>
<dbReference type="REBASE" id="152700">
    <property type="entry name" value="V.Rph841ORF106P"/>
</dbReference>
<dbReference type="REBASE" id="156150">
    <property type="entry name" value="V.BamRD77ORF3565P"/>
</dbReference>
<dbReference type="REBASE" id="233039">
    <property type="entry name" value="V.SfrNXT3ORF1642P"/>
</dbReference>
<dbReference type="REBASE" id="4643">
    <property type="entry name" value="V.NmeAIP"/>
</dbReference>
<dbReference type="EnsemblBacteria" id="CAM07716">
    <property type="protein sequence ID" value="CAM07716"/>
    <property type="gene ID" value="NMA0429"/>
</dbReference>
<dbReference type="KEGG" id="nma:NMA0429"/>
<dbReference type="HOGENOM" id="CLU_111913_1_1_4"/>
<dbReference type="Proteomes" id="UP000000626">
    <property type="component" value="Chromosome"/>
</dbReference>
<dbReference type="GO" id="GO:0004519">
    <property type="term" value="F:endonuclease activity"/>
    <property type="evidence" value="ECO:0007669"/>
    <property type="project" value="UniProtKB-KW"/>
</dbReference>
<dbReference type="GO" id="GO:0006298">
    <property type="term" value="P:mismatch repair"/>
    <property type="evidence" value="ECO:0007669"/>
    <property type="project" value="InterPro"/>
</dbReference>
<dbReference type="CDD" id="cd00221">
    <property type="entry name" value="Vsr"/>
    <property type="match status" value="1"/>
</dbReference>
<dbReference type="Gene3D" id="3.40.960.10">
    <property type="entry name" value="VSR Endonuclease"/>
    <property type="match status" value="1"/>
</dbReference>
<dbReference type="InterPro" id="IPR004603">
    <property type="entry name" value="DNA_mismatch_endonuc_vsr"/>
</dbReference>
<dbReference type="InterPro" id="IPR011335">
    <property type="entry name" value="Restrct_endonuc-II-like"/>
</dbReference>
<dbReference type="NCBIfam" id="TIGR00632">
    <property type="entry name" value="vsr"/>
    <property type="match status" value="1"/>
</dbReference>
<dbReference type="Pfam" id="PF03852">
    <property type="entry name" value="Vsr"/>
    <property type="match status" value="1"/>
</dbReference>
<dbReference type="PIRSF" id="PIRSF018267">
    <property type="entry name" value="VSR_endonuc"/>
    <property type="match status" value="1"/>
</dbReference>
<dbReference type="SUPFAM" id="SSF52980">
    <property type="entry name" value="Restriction endonuclease-like"/>
    <property type="match status" value="1"/>
</dbReference>
<sequence length="140" mass="16751">MTDIFTTSKRSFVMLKIHSKETKPEVLVRKFLFFQGFRYRKNDKRYVGKPDIVLSKYKTVVFIHGCFWYGHSCNKGHIPKSNTDFWLEKITKNCERDIKNETELEKIGFKVIVVWECELKNKAICRERLNRLVREIKDAV</sequence>
<reference key="1">
    <citation type="journal article" date="2000" name="Nature">
        <title>Complete DNA sequence of a serogroup A strain of Neisseria meningitidis Z2491.</title>
        <authorList>
            <person name="Parkhill J."/>
            <person name="Achtman M."/>
            <person name="James K.D."/>
            <person name="Bentley S.D."/>
            <person name="Churcher C.M."/>
            <person name="Klee S.R."/>
            <person name="Morelli G."/>
            <person name="Basham D."/>
            <person name="Brown D."/>
            <person name="Chillingworth T."/>
            <person name="Davies R.M."/>
            <person name="Davis P."/>
            <person name="Devlin K."/>
            <person name="Feltwell T."/>
            <person name="Hamlin N."/>
            <person name="Holroyd S."/>
            <person name="Jagels K."/>
            <person name="Leather S."/>
            <person name="Moule S."/>
            <person name="Mungall K.L."/>
            <person name="Quail M.A."/>
            <person name="Rajandream M.A."/>
            <person name="Rutherford K.M."/>
            <person name="Simmonds M."/>
            <person name="Skelton J."/>
            <person name="Whitehead S."/>
            <person name="Spratt B.G."/>
            <person name="Barrell B.G."/>
        </authorList>
    </citation>
    <scope>NUCLEOTIDE SEQUENCE [LARGE SCALE GENOMIC DNA]</scope>
    <source>
        <strain>DSM 15465 / Z2491</strain>
    </source>
</reference>
<reference key="2">
    <citation type="journal article" date="2003" name="Nucleic Acids Res.">
        <title>A nomenclature for restriction enzymes, DNA methyltransferases, homing endonucleases and their genes.</title>
        <authorList>
            <person name="Roberts R.J."/>
            <person name="Belfort M."/>
            <person name="Bestor T."/>
            <person name="Bhagwat A.S."/>
            <person name="Bickle T.A."/>
            <person name="Bitinaite J."/>
            <person name="Blumenthal R.M."/>
            <person name="Degtyarev S.K."/>
            <person name="Dryden D.T."/>
            <person name="Dybvig K."/>
            <person name="Firman K."/>
            <person name="Gromova E.S."/>
            <person name="Gumport R.I."/>
            <person name="Halford S.E."/>
            <person name="Hattman S."/>
            <person name="Heitman J."/>
            <person name="Hornby D.P."/>
            <person name="Janulaitis A."/>
            <person name="Jeltsch A."/>
            <person name="Josephsen J."/>
            <person name="Kiss A."/>
            <person name="Klaenhammer T.R."/>
            <person name="Kobayashi I."/>
            <person name="Kong H."/>
            <person name="Krueger D.H."/>
            <person name="Lacks S."/>
            <person name="Marinus M.G."/>
            <person name="Miyahara M."/>
            <person name="Morgan R.D."/>
            <person name="Murray N.E."/>
            <person name="Nagaraja V."/>
            <person name="Piekarowicz A."/>
            <person name="Pingoud A."/>
            <person name="Raleigh E."/>
            <person name="Rao D.N."/>
            <person name="Reich N."/>
            <person name="Repin V.E."/>
            <person name="Selker E.U."/>
            <person name="Shaw P.C."/>
            <person name="Stein D.C."/>
            <person name="Stoddard B.L."/>
            <person name="Szybalski W."/>
            <person name="Trautner T.A."/>
            <person name="Van Etten J.L."/>
            <person name="Vitor J.M."/>
            <person name="Wilson G.G."/>
            <person name="Xu S.Y."/>
        </authorList>
    </citation>
    <scope>NOMENCLATURE</scope>
</reference>
<comment type="function">
    <text evidence="1">May nick NmeAIP sequences that contain T/G mispairs resulting from m5C-deamination. If unrepaired, these mismatches can lead to C-to-T transition mutations. The very short patch (VSP) repair process counteracts the mutagenic process by repairing the mismatches in favor of the G-containing strand. This enzyme is an endonuclease that nicks double-stranded DNA within the sequence CCGG (C-methylation site unknown) next to the thymidine residue that is mismatched to 2'-deoxyguanosine. The incision is mismatch-dependent and strand-specific.</text>
</comment>
<comment type="similarity">
    <text evidence="3">Belongs to the Vsr family.</text>
</comment>
<name>VSR_NEIMA</name>
<gene>
    <name type="primary">vsr</name>
    <name type="ordered locus">NMA0429</name>
</gene>
<keyword id="KW-0227">DNA damage</keyword>
<keyword id="KW-0234">DNA repair</keyword>
<keyword id="KW-0255">Endonuclease</keyword>
<keyword id="KW-0378">Hydrolase</keyword>
<keyword id="KW-0540">Nuclease</keyword>
<proteinExistence type="inferred from homology"/>
<evidence type="ECO:0000250" key="1">
    <source>
        <dbReference type="UniProtKB" id="P09184"/>
    </source>
</evidence>
<evidence type="ECO:0000303" key="2">
    <source>
    </source>
</evidence>
<evidence type="ECO:0000305" key="3"/>